<feature type="chain" id="PRO_0000171670" description="Cytidine deaminase">
    <location>
        <begin position="1"/>
        <end position="297"/>
    </location>
</feature>
<feature type="domain" description="CMP/dCMP-type deaminase 1" evidence="2">
    <location>
        <begin position="50"/>
        <end position="170"/>
    </location>
</feature>
<feature type="domain" description="CMP/dCMP-type deaminase 2" evidence="2">
    <location>
        <begin position="189"/>
        <end position="297"/>
    </location>
</feature>
<feature type="active site" description="Proton donor" evidence="1">
    <location>
        <position position="106"/>
    </location>
</feature>
<feature type="binding site" evidence="1">
    <location>
        <begin position="91"/>
        <end position="93"/>
    </location>
    <ligand>
        <name>substrate</name>
    </ligand>
</feature>
<feature type="binding site" evidence="1">
    <location>
        <position position="104"/>
    </location>
    <ligand>
        <name>Zn(2+)</name>
        <dbReference type="ChEBI" id="CHEBI:29105"/>
        <note>catalytic</note>
    </ligand>
</feature>
<feature type="binding site" evidence="1">
    <location>
        <position position="131"/>
    </location>
    <ligand>
        <name>Zn(2+)</name>
        <dbReference type="ChEBI" id="CHEBI:29105"/>
        <note>catalytic</note>
    </ligand>
</feature>
<feature type="binding site" evidence="1">
    <location>
        <position position="134"/>
    </location>
    <ligand>
        <name>Zn(2+)</name>
        <dbReference type="ChEBI" id="CHEBI:29105"/>
        <note>catalytic</note>
    </ligand>
</feature>
<reference key="1">
    <citation type="journal article" date="2005" name="Proc. Natl. Acad. Sci. U.S.A.">
        <title>Complete genome sequence of Vibrio fischeri: a symbiotic bacterium with pathogenic congeners.</title>
        <authorList>
            <person name="Ruby E.G."/>
            <person name="Urbanowski M."/>
            <person name="Campbell J."/>
            <person name="Dunn A."/>
            <person name="Faini M."/>
            <person name="Gunsalus R."/>
            <person name="Lostroh P."/>
            <person name="Lupp C."/>
            <person name="McCann J."/>
            <person name="Millikan D."/>
            <person name="Schaefer A."/>
            <person name="Stabb E."/>
            <person name="Stevens A."/>
            <person name="Visick K."/>
            <person name="Whistler C."/>
            <person name="Greenberg E.P."/>
        </authorList>
    </citation>
    <scope>NUCLEOTIDE SEQUENCE [LARGE SCALE GENOMIC DNA]</scope>
    <source>
        <strain>ATCC 700601 / ES114</strain>
    </source>
</reference>
<evidence type="ECO:0000255" key="1">
    <source>
        <dbReference type="HAMAP-Rule" id="MF_01558"/>
    </source>
</evidence>
<evidence type="ECO:0000255" key="2">
    <source>
        <dbReference type="PROSITE-ProRule" id="PRU01083"/>
    </source>
</evidence>
<sequence length="297" mass="32347">MTRLQQRLEEALANLPDALRTSLTPIINTEFKGVISKEQFQSLQADSQLSDKELRLALLPLAAAFSVAPISNFYVGAIARGLTGNLYFGANMEYNDVQLGQTIHAEQSAISHAWIQGETGISNITINFSPCGHCRQFMNELTTADSLMVQLPERNEKSLQEYLPESFGPKDLGIEGGLLAPLSHNLALETESPLLRKALEAANRSHAPYSHNLSGIALEMESGEVYYGMYAENAAFNPSLPPLQVALVHANMSREDILTVKSAALVEDHKGAISHLAITQSTLEALNPDVTLEYASL</sequence>
<comment type="function">
    <text evidence="1">This enzyme scavenges exogenous and endogenous cytidine and 2'-deoxycytidine for UMP synthesis.</text>
</comment>
<comment type="catalytic activity">
    <reaction evidence="1">
        <text>cytidine + H2O + H(+) = uridine + NH4(+)</text>
        <dbReference type="Rhea" id="RHEA:16069"/>
        <dbReference type="ChEBI" id="CHEBI:15377"/>
        <dbReference type="ChEBI" id="CHEBI:15378"/>
        <dbReference type="ChEBI" id="CHEBI:16704"/>
        <dbReference type="ChEBI" id="CHEBI:17562"/>
        <dbReference type="ChEBI" id="CHEBI:28938"/>
        <dbReference type="EC" id="3.5.4.5"/>
    </reaction>
</comment>
<comment type="catalytic activity">
    <reaction evidence="1">
        <text>2'-deoxycytidine + H2O + H(+) = 2'-deoxyuridine + NH4(+)</text>
        <dbReference type="Rhea" id="RHEA:13433"/>
        <dbReference type="ChEBI" id="CHEBI:15377"/>
        <dbReference type="ChEBI" id="CHEBI:15378"/>
        <dbReference type="ChEBI" id="CHEBI:15698"/>
        <dbReference type="ChEBI" id="CHEBI:16450"/>
        <dbReference type="ChEBI" id="CHEBI:28938"/>
        <dbReference type="EC" id="3.5.4.5"/>
    </reaction>
</comment>
<comment type="cofactor">
    <cofactor evidence="1">
        <name>Zn(2+)</name>
        <dbReference type="ChEBI" id="CHEBI:29105"/>
    </cofactor>
    <text evidence="1">Binds 1 zinc ion.</text>
</comment>
<comment type="subunit">
    <text evidence="1">Homodimer.</text>
</comment>
<comment type="similarity">
    <text evidence="1">Belongs to the cytidine and deoxycytidylate deaminase family.</text>
</comment>
<gene>
    <name evidence="1" type="primary">cdd</name>
    <name type="ordered locus">VF_1485</name>
</gene>
<organism>
    <name type="scientific">Aliivibrio fischeri (strain ATCC 700601 / ES114)</name>
    <name type="common">Vibrio fischeri</name>
    <dbReference type="NCBI Taxonomy" id="312309"/>
    <lineage>
        <taxon>Bacteria</taxon>
        <taxon>Pseudomonadati</taxon>
        <taxon>Pseudomonadota</taxon>
        <taxon>Gammaproteobacteria</taxon>
        <taxon>Vibrionales</taxon>
        <taxon>Vibrionaceae</taxon>
        <taxon>Aliivibrio</taxon>
    </lineage>
</organism>
<dbReference type="EC" id="3.5.4.5" evidence="1"/>
<dbReference type="EMBL" id="CP000020">
    <property type="protein sequence ID" value="AAW85980.1"/>
    <property type="molecule type" value="Genomic_DNA"/>
</dbReference>
<dbReference type="RefSeq" id="WP_011262070.1">
    <property type="nucleotide sequence ID" value="NC_006840.2"/>
</dbReference>
<dbReference type="RefSeq" id="YP_204868.1">
    <property type="nucleotide sequence ID" value="NC_006840.2"/>
</dbReference>
<dbReference type="SMR" id="Q5E4R6"/>
<dbReference type="STRING" id="312309.VF_1485"/>
<dbReference type="EnsemblBacteria" id="AAW85980">
    <property type="protein sequence ID" value="AAW85980"/>
    <property type="gene ID" value="VF_1485"/>
</dbReference>
<dbReference type="GeneID" id="54164158"/>
<dbReference type="KEGG" id="vfi:VF_1485"/>
<dbReference type="PATRIC" id="fig|312309.11.peg.1502"/>
<dbReference type="eggNOG" id="COG0295">
    <property type="taxonomic scope" value="Bacteria"/>
</dbReference>
<dbReference type="HOGENOM" id="CLU_052424_0_0_6"/>
<dbReference type="OrthoDB" id="9795347at2"/>
<dbReference type="Proteomes" id="UP000000537">
    <property type="component" value="Chromosome I"/>
</dbReference>
<dbReference type="GO" id="GO:0005829">
    <property type="term" value="C:cytosol"/>
    <property type="evidence" value="ECO:0007669"/>
    <property type="project" value="TreeGrafter"/>
</dbReference>
<dbReference type="GO" id="GO:0004126">
    <property type="term" value="F:cytidine deaminase activity"/>
    <property type="evidence" value="ECO:0007669"/>
    <property type="project" value="UniProtKB-UniRule"/>
</dbReference>
<dbReference type="GO" id="GO:0042802">
    <property type="term" value="F:identical protein binding"/>
    <property type="evidence" value="ECO:0007669"/>
    <property type="project" value="UniProtKB-ARBA"/>
</dbReference>
<dbReference type="GO" id="GO:0008270">
    <property type="term" value="F:zinc ion binding"/>
    <property type="evidence" value="ECO:0007669"/>
    <property type="project" value="UniProtKB-UniRule"/>
</dbReference>
<dbReference type="GO" id="GO:0009972">
    <property type="term" value="P:cytidine deamination"/>
    <property type="evidence" value="ECO:0007669"/>
    <property type="project" value="InterPro"/>
</dbReference>
<dbReference type="CDD" id="cd01283">
    <property type="entry name" value="cytidine_deaminase"/>
    <property type="match status" value="2"/>
</dbReference>
<dbReference type="FunFam" id="3.40.140.10:FF:000007">
    <property type="entry name" value="Cytidine deaminase"/>
    <property type="match status" value="1"/>
</dbReference>
<dbReference type="Gene3D" id="3.40.140.10">
    <property type="entry name" value="Cytidine Deaminase, domain 2"/>
    <property type="match status" value="2"/>
</dbReference>
<dbReference type="HAMAP" id="MF_01558">
    <property type="entry name" value="Cyt_deam"/>
    <property type="match status" value="1"/>
</dbReference>
<dbReference type="InterPro" id="IPR016192">
    <property type="entry name" value="APOBEC/CMP_deaminase_Zn-bd"/>
</dbReference>
<dbReference type="InterPro" id="IPR002125">
    <property type="entry name" value="CMP_dCMP_dom"/>
</dbReference>
<dbReference type="InterPro" id="IPR013171">
    <property type="entry name" value="Cyd/dCyd_deaminase_Zn-bd"/>
</dbReference>
<dbReference type="InterPro" id="IPR050202">
    <property type="entry name" value="Cyt/Deoxycyt_deaminase"/>
</dbReference>
<dbReference type="InterPro" id="IPR006263">
    <property type="entry name" value="Cyt_deam_dimer"/>
</dbReference>
<dbReference type="InterPro" id="IPR016193">
    <property type="entry name" value="Cytidine_deaminase-like"/>
</dbReference>
<dbReference type="InterPro" id="IPR020797">
    <property type="entry name" value="Cytidine_deaminase_bacteria"/>
</dbReference>
<dbReference type="NCBIfam" id="TIGR01355">
    <property type="entry name" value="cyt_deam_dimer"/>
    <property type="match status" value="1"/>
</dbReference>
<dbReference type="NCBIfam" id="NF006537">
    <property type="entry name" value="PRK09027.1"/>
    <property type="match status" value="1"/>
</dbReference>
<dbReference type="PANTHER" id="PTHR11644">
    <property type="entry name" value="CYTIDINE DEAMINASE"/>
    <property type="match status" value="1"/>
</dbReference>
<dbReference type="PANTHER" id="PTHR11644:SF2">
    <property type="entry name" value="CYTIDINE DEAMINASE"/>
    <property type="match status" value="1"/>
</dbReference>
<dbReference type="Pfam" id="PF00383">
    <property type="entry name" value="dCMP_cyt_deam_1"/>
    <property type="match status" value="1"/>
</dbReference>
<dbReference type="Pfam" id="PF08211">
    <property type="entry name" value="dCMP_cyt_deam_2"/>
    <property type="match status" value="1"/>
</dbReference>
<dbReference type="PIRSF" id="PIRSF006334">
    <property type="entry name" value="Cdd_plus_pseudo"/>
    <property type="match status" value="1"/>
</dbReference>
<dbReference type="SUPFAM" id="SSF53927">
    <property type="entry name" value="Cytidine deaminase-like"/>
    <property type="match status" value="2"/>
</dbReference>
<dbReference type="PROSITE" id="PS00903">
    <property type="entry name" value="CYT_DCMP_DEAMINASES_1"/>
    <property type="match status" value="1"/>
</dbReference>
<dbReference type="PROSITE" id="PS51747">
    <property type="entry name" value="CYT_DCMP_DEAMINASES_2"/>
    <property type="match status" value="2"/>
</dbReference>
<name>CDD_ALIF1</name>
<keyword id="KW-0378">Hydrolase</keyword>
<keyword id="KW-0479">Metal-binding</keyword>
<keyword id="KW-1185">Reference proteome</keyword>
<keyword id="KW-0862">Zinc</keyword>
<accession>Q5E4R6</accession>
<protein>
    <recommendedName>
        <fullName evidence="1">Cytidine deaminase</fullName>
        <ecNumber evidence="1">3.5.4.5</ecNumber>
    </recommendedName>
    <alternativeName>
        <fullName evidence="1">Cytidine aminohydrolase</fullName>
        <shortName evidence="1">CDA</shortName>
    </alternativeName>
</protein>
<proteinExistence type="inferred from homology"/>